<gene>
    <name type="ordered locus">7.3</name>
</gene>
<name>GP73_BPT7</name>
<keyword id="KW-0002">3D-structure</keyword>
<keyword id="KW-1185">Reference proteome</keyword>
<keyword id="KW-1188">Viral release from host cell</keyword>
<keyword id="KW-1245">Viral tail assembly</keyword>
<keyword id="KW-1227">Viral tail protein</keyword>
<keyword id="KW-0946">Virion</keyword>
<organism>
    <name type="scientific">Escherichia phage T7</name>
    <name type="common">Bacteriophage T7</name>
    <dbReference type="NCBI Taxonomy" id="10760"/>
    <lineage>
        <taxon>Viruses</taxon>
        <taxon>Duplodnaviria</taxon>
        <taxon>Heunggongvirae</taxon>
        <taxon>Uroviricota</taxon>
        <taxon>Caudoviricetes</taxon>
        <taxon>Autographiviridae</taxon>
        <taxon>Studiervirinae</taxon>
        <taxon>Teseptimavirus</taxon>
        <taxon>Teseptimavirus T7</taxon>
    </lineage>
</organism>
<protein>
    <recommendedName>
        <fullName>Protein 7.3</fullName>
    </recommendedName>
    <alternativeName>
        <fullName>Gene product 7.3</fullName>
        <shortName>Gp7.3</shortName>
    </alternativeName>
</protein>
<proteinExistence type="evidence at protein level"/>
<sequence>MGKKVKKAVKKVTKSVKKVVKEGARPVKQVAGGLAGLAGGTGEAQMVEVPQAAAQIVDVPEKEVSTEDEAQTESGRKKARAGGKKSLSVARSSGGGINI</sequence>
<feature type="chain" id="PRO_0000106514" description="Protein 7.3">
    <location>
        <begin position="1"/>
        <end position="99"/>
    </location>
</feature>
<feature type="region of interest" description="Disordered" evidence="1">
    <location>
        <begin position="59"/>
        <end position="99"/>
    </location>
</feature>
<organismHost>
    <name type="scientific">Escherichia coli</name>
    <dbReference type="NCBI Taxonomy" id="562"/>
</organismHost>
<accession>P03751</accession>
<dbReference type="EMBL" id="V01146">
    <property type="protein sequence ID" value="CAA24423.1"/>
    <property type="molecule type" value="Genomic_DNA"/>
</dbReference>
<dbReference type="PIR" id="A04376">
    <property type="entry name" value="QSBPB7"/>
</dbReference>
<dbReference type="RefSeq" id="NP_041993.1">
    <property type="nucleotide sequence ID" value="NC_001604.1"/>
</dbReference>
<dbReference type="PDB" id="9JYZ">
    <property type="method" value="EM"/>
    <property type="resolution" value="2.70 A"/>
    <property type="chains" value="1/2/v/w/y/z=1-99"/>
</dbReference>
<dbReference type="PDBsum" id="9JYZ"/>
<dbReference type="EMDB" id="EMD-61910"/>
<dbReference type="SMR" id="P03751"/>
<dbReference type="KEGG" id="vg:1261035"/>
<dbReference type="OrthoDB" id="28431at10239"/>
<dbReference type="Proteomes" id="UP000000840">
    <property type="component" value="Genome"/>
</dbReference>
<dbReference type="GO" id="GO:0098015">
    <property type="term" value="C:virus tail"/>
    <property type="evidence" value="ECO:0007669"/>
    <property type="project" value="UniProtKB-KW"/>
</dbReference>
<dbReference type="GO" id="GO:0098003">
    <property type="term" value="P:viral tail assembly"/>
    <property type="evidence" value="ECO:0000314"/>
    <property type="project" value="UniProtKB"/>
</dbReference>
<dbReference type="InterPro" id="IPR024281">
    <property type="entry name" value="Phage_T7-like_viron_assmbl"/>
</dbReference>
<dbReference type="Pfam" id="PF11653">
    <property type="entry name" value="VirionAssem_T7"/>
    <property type="match status" value="1"/>
</dbReference>
<comment type="function">
    <text evidence="2">Plays an essential role most probably in virion tail assembly. May form a scaffold around which gp11 and gp12 polymerize. Gets ejected from the infecting particle into the bacterial cell.</text>
</comment>
<comment type="subcellular location">
    <subcellularLocation>
        <location evidence="2">Virion</location>
    </subcellularLocation>
    <text>Component of the tail.</text>
</comment>
<comment type="similarity">
    <text evidence="3">Belongs to the T7likevirus protein 7.3 family.</text>
</comment>
<reference key="1">
    <citation type="journal article" date="1983" name="J. Mol. Biol.">
        <title>Complete nucleotide sequence of bacteriophage T7 DNA and the locations of T7 genetic elements.</title>
        <authorList>
            <person name="Dunn J.J."/>
            <person name="Studier F.W."/>
        </authorList>
    </citation>
    <scope>NUCLEOTIDE SEQUENCE [LARGE SCALE GENOMIC DNA]</scope>
</reference>
<reference key="2">
    <citation type="journal article" date="2005" name="Virology">
        <title>Changes in bacteriophage T7 virion structure at the initiation of infection.</title>
        <authorList>
            <person name="Kemp P."/>
            <person name="Garcia L.R."/>
            <person name="Molineux I.J."/>
        </authorList>
    </citation>
    <scope>FUNCTION IN VIRION MATURATION</scope>
    <scope>SUBCELLULAR LOCATION</scope>
</reference>
<evidence type="ECO:0000256" key="1">
    <source>
        <dbReference type="SAM" id="MobiDB-lite"/>
    </source>
</evidence>
<evidence type="ECO:0000269" key="2">
    <source>
    </source>
</evidence>
<evidence type="ECO:0000305" key="3"/>